<reference key="1">
    <citation type="journal article" date="1997" name="Mol. Phylogenet. Evol.">
        <title>Phylogenetic analysis of the Triticeae (Poaceae) based on rpoA sequence data.</title>
        <authorList>
            <person name="Petersen G."/>
            <person name="Seberg O."/>
        </authorList>
    </citation>
    <scope>NUCLEOTIDE SEQUENCE [GENOMIC DNA]</scope>
    <source>
        <strain>H9182</strain>
        <tissue>Leaf</tissue>
    </source>
</reference>
<organism>
    <name type="scientific">Psathyrostachys stoloniformis</name>
    <dbReference type="NCBI Taxonomy" id="58873"/>
    <lineage>
        <taxon>Eukaryota</taxon>
        <taxon>Viridiplantae</taxon>
        <taxon>Streptophyta</taxon>
        <taxon>Embryophyta</taxon>
        <taxon>Tracheophyta</taxon>
        <taxon>Spermatophyta</taxon>
        <taxon>Magnoliopsida</taxon>
        <taxon>Liliopsida</taxon>
        <taxon>Poales</taxon>
        <taxon>Poaceae</taxon>
        <taxon>BOP clade</taxon>
        <taxon>Pooideae</taxon>
        <taxon>Triticodae</taxon>
        <taxon>Triticeae</taxon>
        <taxon>Hordeinae</taxon>
        <taxon>Psathyrostachys</taxon>
    </lineage>
</organism>
<proteinExistence type="inferred from homology"/>
<sequence length="339" mass="39006">MVREEVAGSTQTLQWKCVESRVDSKRLYYGRFILSPLRKGQADTVGIALRRALLGEIEGTCITRAKFGSXPHEYSTIAGIEESVQEILLNLKEIVLRSNLYGVRDASICVKGPRYITAQDIILPPSVEIVDTXQPIANLTEPIDFCIDLQIKRDRGYQTELRKNYQDGSYPIXXVSMPVRNVNYSIFSCGNGNEKHEILFLEIWTNGSLTPKEALYEASRNLIDLFLPFLHAEEEGTSFEENKNRFTPPLFTFQKRLTNLKKNKKGIPLNCIFIDQLELTSRTYNCLKRANIHTLLDLLSKTEEDLMRIDSFRMEDRKHIWDTLEKHLPIDLLKNKLSF</sequence>
<feature type="chain" id="PRO_0000175487" description="DNA-directed RNA polymerase subunit alpha">
    <location>
        <begin position="1"/>
        <end position="339"/>
    </location>
</feature>
<feature type="region of interest" description="Alpha N-terminal domain (alpha-NTD)" evidence="1">
    <location>
        <begin position="1"/>
        <end position="233"/>
    </location>
</feature>
<feature type="region of interest" description="Alpha C-terminal domain (alpha-CTD)" evidence="1">
    <location>
        <begin position="264"/>
        <end position="339"/>
    </location>
</feature>
<keyword id="KW-0150">Chloroplast</keyword>
<keyword id="KW-0240">DNA-directed RNA polymerase</keyword>
<keyword id="KW-0548">Nucleotidyltransferase</keyword>
<keyword id="KW-0934">Plastid</keyword>
<keyword id="KW-0804">Transcription</keyword>
<keyword id="KW-0808">Transferase</keyword>
<geneLocation type="chloroplast"/>
<name>RPOA_PSAST</name>
<dbReference type="EC" id="2.7.7.6" evidence="1"/>
<dbReference type="EMBL" id="Z77754">
    <property type="protein sequence ID" value="CAB01339.1"/>
    <property type="molecule type" value="Genomic_DNA"/>
</dbReference>
<dbReference type="GO" id="GO:0009507">
    <property type="term" value="C:chloroplast"/>
    <property type="evidence" value="ECO:0007669"/>
    <property type="project" value="UniProtKB-SubCell"/>
</dbReference>
<dbReference type="GO" id="GO:0000428">
    <property type="term" value="C:DNA-directed RNA polymerase complex"/>
    <property type="evidence" value="ECO:0007669"/>
    <property type="project" value="UniProtKB-KW"/>
</dbReference>
<dbReference type="GO" id="GO:0005739">
    <property type="term" value="C:mitochondrion"/>
    <property type="evidence" value="ECO:0007669"/>
    <property type="project" value="GOC"/>
</dbReference>
<dbReference type="GO" id="GO:0003677">
    <property type="term" value="F:DNA binding"/>
    <property type="evidence" value="ECO:0007669"/>
    <property type="project" value="UniProtKB-UniRule"/>
</dbReference>
<dbReference type="GO" id="GO:0003899">
    <property type="term" value="F:DNA-directed RNA polymerase activity"/>
    <property type="evidence" value="ECO:0007669"/>
    <property type="project" value="UniProtKB-UniRule"/>
</dbReference>
<dbReference type="GO" id="GO:0046983">
    <property type="term" value="F:protein dimerization activity"/>
    <property type="evidence" value="ECO:0007669"/>
    <property type="project" value="InterPro"/>
</dbReference>
<dbReference type="GO" id="GO:0006351">
    <property type="term" value="P:DNA-templated transcription"/>
    <property type="evidence" value="ECO:0007669"/>
    <property type="project" value="UniProtKB-UniRule"/>
</dbReference>
<dbReference type="CDD" id="cd06928">
    <property type="entry name" value="RNAP_alpha_NTD"/>
    <property type="match status" value="1"/>
</dbReference>
<dbReference type="FunFam" id="1.10.150.20:FF:000021">
    <property type="entry name" value="DNA-directed RNA polymerase subunit alpha"/>
    <property type="match status" value="1"/>
</dbReference>
<dbReference type="FunFam" id="2.170.120.12:FF:000001">
    <property type="entry name" value="DNA-directed RNA polymerase subunit alpha"/>
    <property type="match status" value="1"/>
</dbReference>
<dbReference type="Gene3D" id="1.10.150.20">
    <property type="entry name" value="5' to 3' exonuclease, C-terminal subdomain"/>
    <property type="match status" value="1"/>
</dbReference>
<dbReference type="Gene3D" id="2.170.120.12">
    <property type="entry name" value="DNA-directed RNA polymerase, insert domain"/>
    <property type="match status" value="1"/>
</dbReference>
<dbReference type="Gene3D" id="3.30.1360.10">
    <property type="entry name" value="RNA polymerase, RBP11-like subunit"/>
    <property type="match status" value="1"/>
</dbReference>
<dbReference type="HAMAP" id="MF_00059">
    <property type="entry name" value="RNApol_bact_RpoA"/>
    <property type="match status" value="1"/>
</dbReference>
<dbReference type="InterPro" id="IPR011262">
    <property type="entry name" value="DNA-dir_RNA_pol_insert"/>
</dbReference>
<dbReference type="InterPro" id="IPR011263">
    <property type="entry name" value="DNA-dir_RNA_pol_RpoA/D/Rpb3"/>
</dbReference>
<dbReference type="InterPro" id="IPR011773">
    <property type="entry name" value="DNA-dir_RpoA"/>
</dbReference>
<dbReference type="InterPro" id="IPR036603">
    <property type="entry name" value="RBP11-like"/>
</dbReference>
<dbReference type="InterPro" id="IPR011260">
    <property type="entry name" value="RNAP_asu_C"/>
</dbReference>
<dbReference type="InterPro" id="IPR036643">
    <property type="entry name" value="RNApol_insert_sf"/>
</dbReference>
<dbReference type="NCBIfam" id="TIGR02027">
    <property type="entry name" value="rpoA"/>
    <property type="match status" value="1"/>
</dbReference>
<dbReference type="Pfam" id="PF01000">
    <property type="entry name" value="RNA_pol_A_bac"/>
    <property type="match status" value="1"/>
</dbReference>
<dbReference type="Pfam" id="PF03118">
    <property type="entry name" value="RNA_pol_A_CTD"/>
    <property type="match status" value="1"/>
</dbReference>
<dbReference type="Pfam" id="PF01193">
    <property type="entry name" value="RNA_pol_L"/>
    <property type="match status" value="1"/>
</dbReference>
<dbReference type="SMART" id="SM00662">
    <property type="entry name" value="RPOLD"/>
    <property type="match status" value="1"/>
</dbReference>
<dbReference type="SUPFAM" id="SSF47789">
    <property type="entry name" value="C-terminal domain of RNA polymerase alpha subunit"/>
    <property type="match status" value="1"/>
</dbReference>
<dbReference type="SUPFAM" id="SSF56553">
    <property type="entry name" value="Insert subdomain of RNA polymerase alpha subunit"/>
    <property type="match status" value="1"/>
</dbReference>
<dbReference type="SUPFAM" id="SSF55257">
    <property type="entry name" value="RBP11-like subunits of RNA polymerase"/>
    <property type="match status" value="1"/>
</dbReference>
<accession>P93962</accession>
<gene>
    <name evidence="1" type="primary">rpoA</name>
</gene>
<comment type="function">
    <text evidence="1">DNA-dependent RNA polymerase catalyzes the transcription of DNA into RNA using the four ribonucleoside triphosphates as substrates.</text>
</comment>
<comment type="catalytic activity">
    <reaction evidence="1">
        <text>RNA(n) + a ribonucleoside 5'-triphosphate = RNA(n+1) + diphosphate</text>
        <dbReference type="Rhea" id="RHEA:21248"/>
        <dbReference type="Rhea" id="RHEA-COMP:14527"/>
        <dbReference type="Rhea" id="RHEA-COMP:17342"/>
        <dbReference type="ChEBI" id="CHEBI:33019"/>
        <dbReference type="ChEBI" id="CHEBI:61557"/>
        <dbReference type="ChEBI" id="CHEBI:140395"/>
        <dbReference type="EC" id="2.7.7.6"/>
    </reaction>
</comment>
<comment type="subunit">
    <text evidence="1">In plastids the minimal PEP RNA polymerase catalytic core is composed of four subunits: alpha, beta, beta', and beta''. When a (nuclear-encoded) sigma factor is associated with the core the holoenzyme is formed, which can initiate transcription.</text>
</comment>
<comment type="subcellular location">
    <subcellularLocation>
        <location>Plastid</location>
        <location>Chloroplast</location>
    </subcellularLocation>
</comment>
<comment type="domain">
    <text evidence="1">The N-terminal domain is essential for RNAP assembly and basal transcription, whereas the C-terminal domain is involved in interaction with transcriptional regulators and with upstream promoter elements.</text>
</comment>
<comment type="similarity">
    <text evidence="1">Belongs to the RNA polymerase alpha chain family.</text>
</comment>
<evidence type="ECO:0000255" key="1">
    <source>
        <dbReference type="HAMAP-Rule" id="MF_00059"/>
    </source>
</evidence>
<protein>
    <recommendedName>
        <fullName evidence="1">DNA-directed RNA polymerase subunit alpha</fullName>
        <shortName evidence="1">PEP</shortName>
        <ecNumber evidence="1">2.7.7.6</ecNumber>
    </recommendedName>
    <alternativeName>
        <fullName evidence="1">Plastid-encoded RNA polymerase subunit alpha</fullName>
        <shortName evidence="1">RNA polymerase subunit alpha</shortName>
    </alternativeName>
</protein>